<feature type="chain" id="PRO_0000449489" description="Serine/threonine-protein kinase ZRK1">
    <location>
        <begin position="1"/>
        <end position="351"/>
    </location>
</feature>
<feature type="domain" description="Protein kinase" evidence="1">
    <location>
        <begin position="60"/>
        <end position="347"/>
    </location>
</feature>
<feature type="active site" description="Proton acceptor" evidence="1">
    <location>
        <position position="191"/>
    </location>
</feature>
<feature type="binding site" evidence="1">
    <location>
        <begin position="66"/>
        <end position="74"/>
    </location>
    <ligand>
        <name>ATP</name>
        <dbReference type="ChEBI" id="CHEBI:30616"/>
    </ligand>
</feature>
<feature type="binding site" evidence="1">
    <location>
        <position position="87"/>
    </location>
    <ligand>
        <name>ATP</name>
        <dbReference type="ChEBI" id="CHEBI:30616"/>
    </ligand>
</feature>
<feature type="sequence variant" description="In strain: cv. Kas-1, cv. Kon and cv. Sorbo; confers sensitivity to the harmful biotrophic bacteria Xanthomonas campestris pv. campestris (Xcc)." evidence="2">
    <original>S</original>
    <variation>F</variation>
    <location>
        <position position="211"/>
    </location>
</feature>
<feature type="mutagenesis site" description="Impaired interaction with RPP13L4/ZAR1 and reduced ability to mediate cell death as well as an increased sensitivity to the pathogenic biotrophic bacteria Xanthomonas campestris pv. campestris (Xcc)." evidence="5">
    <original>G</original>
    <variation>A</variation>
    <location>
        <position position="27"/>
    </location>
</feature>
<feature type="mutagenesis site" description="Impaired interaction with RPP13L4/ZAR1 and reduced ability to mediate cell death." evidence="5">
    <original>L</original>
    <variation>E</variation>
    <location>
        <position position="31"/>
    </location>
</feature>
<feature type="mutagenesis site" description="Impaired interaction with RPP13L4/ZAR1 and reduced ability to mediate cell death as well as an increased sensitivity to the pathogenic biotrophic bacteria Xanthomonas campestris pv. campestris (Xcc)." evidence="5">
    <original>V</original>
    <variation>E</variation>
    <location>
        <position position="35"/>
    </location>
</feature>
<feature type="mutagenesis site" description="Reduced interaction with uridylylated PBL2 and reduced ability to mediate cell death." evidence="5">
    <original>Q</original>
    <variation>Y</variation>
    <location>
        <position position="68"/>
    </location>
</feature>
<feature type="mutagenesis site" description="Abolished interaction with uridylylated PBL2 and abolished ability to mediate cell death as well as an increased sensitivity to the pathogenic biotrophic bacteria Xanthomonas campestris pv. campestris (Xcc)." evidence="5">
    <original>D</original>
    <variation>Y</variation>
    <location>
        <position position="69"/>
    </location>
</feature>
<feature type="mutagenesis site" description="Reduced interaction with uridylylated PBL2 and reduced ability to mediate cell death." evidence="5">
    <original>V</original>
    <variation>Y</variation>
    <location>
        <position position="70"/>
    </location>
</feature>
<feature type="mutagenesis site" description="Impaired interaction in the presence of the Xanthomonas campestris effector XopAC/AvrAC, but normal interaction with RPP13L4/ZAR1." evidence="3">
    <original>L</original>
    <variation>F</variation>
    <location>
        <position position="179"/>
    </location>
</feature>
<feature type="mutagenesis site" description="Abolished interaction with uridylylated PBL2 and abolished ability to mediate cell death as well as an increased sensitivity to the pathogenic biotrophic bacteria Xanthomonas campestris pv. campestris (Xcc)." evidence="5">
    <original>T</original>
    <variation>Y</variation>
    <location>
        <position position="231"/>
    </location>
</feature>
<feature type="mutagenesis site" description="Abolished interaction with uridylylated PBL2 and abolished ability to mediate cell death as well as an increased sensitivity to the pathogenic biotrophic bacteria Xanthomonas campestris pv. campestris (Xcc)." evidence="5">
    <original>F</original>
    <variation>A</variation>
    <location>
        <position position="232"/>
    </location>
</feature>
<feature type="mutagenesis site" description="Reduced interaction with uridylylated PBL2 and reduced ability to mediate cell death." evidence="5">
    <original>G</original>
    <variation>A</variation>
    <location>
        <position position="233"/>
    </location>
</feature>
<feature type="mutagenesis site" description="Abolished interaction with uridylylated PBL2 and abolished ability to mediate cell death." evidence="5">
    <original>I</original>
    <variation>E</variation>
    <location>
        <position position="235"/>
    </location>
</feature>
<feature type="mutagenesis site" description="Abolished interaction with uridylylated PBL2 and abolished ability to mediate cell death as well as an increased sensitivity to the pathogenic biotrophic bacteria Xanthomonas campestris pv. campestris (Xcc)." evidence="5">
    <original>H</original>
    <variation>E</variation>
    <location>
        <position position="240"/>
    </location>
</feature>
<feature type="sequence conflict" description="In Ref. 4; BAD94258." evidence="9" ref="4">
    <original>L</original>
    <variation>P</variation>
    <location>
        <position position="123"/>
    </location>
</feature>
<feature type="helix" evidence="12">
    <location>
        <begin position="19"/>
        <end position="38"/>
    </location>
</feature>
<feature type="helix" evidence="12">
    <location>
        <begin position="50"/>
        <end position="56"/>
    </location>
</feature>
<feature type="turn" evidence="12">
    <location>
        <begin position="57"/>
        <end position="60"/>
    </location>
</feature>
<feature type="strand" evidence="12">
    <location>
        <begin position="65"/>
        <end position="68"/>
    </location>
</feature>
<feature type="strand" evidence="12">
    <location>
        <begin position="70"/>
        <end position="79"/>
    </location>
</feature>
<feature type="strand" evidence="12">
    <location>
        <begin position="82"/>
        <end position="89"/>
    </location>
</feature>
<feature type="helix" evidence="12">
    <location>
        <begin position="91"/>
        <end position="94"/>
    </location>
</feature>
<feature type="turn" evidence="12">
    <location>
        <begin position="95"/>
        <end position="97"/>
    </location>
</feature>
<feature type="strand" evidence="12">
    <location>
        <begin position="98"/>
        <end position="100"/>
    </location>
</feature>
<feature type="helix" evidence="12">
    <location>
        <begin position="102"/>
        <end position="113"/>
    </location>
</feature>
<feature type="helix" evidence="12">
    <location>
        <begin position="114"/>
        <end position="116"/>
    </location>
</feature>
<feature type="strand" evidence="12">
    <location>
        <begin position="123"/>
        <end position="127"/>
    </location>
</feature>
<feature type="strand" evidence="12">
    <location>
        <begin position="129"/>
        <end position="132"/>
    </location>
</feature>
<feature type="strand" evidence="12">
    <location>
        <begin position="134"/>
        <end position="138"/>
    </location>
</feature>
<feature type="strand" evidence="12">
    <location>
        <begin position="147"/>
        <end position="149"/>
    </location>
</feature>
<feature type="helix" evidence="12">
    <location>
        <begin position="162"/>
        <end position="181"/>
    </location>
</feature>
<feature type="strand" evidence="12">
    <location>
        <begin position="182"/>
        <end position="185"/>
    </location>
</feature>
<feature type="helix" evidence="12">
    <location>
        <begin position="194"/>
        <end position="196"/>
    </location>
</feature>
<feature type="strand" evidence="12">
    <location>
        <begin position="205"/>
        <end position="207"/>
    </location>
</feature>
<feature type="turn" evidence="12">
    <location>
        <begin position="232"/>
        <end position="235"/>
    </location>
</feature>
<feature type="helix" evidence="12">
    <location>
        <begin position="237"/>
        <end position="242"/>
    </location>
</feature>
<feature type="helix" evidence="12">
    <location>
        <begin position="248"/>
        <end position="263"/>
    </location>
</feature>
<feature type="strand" evidence="12">
    <location>
        <begin position="271"/>
        <end position="273"/>
    </location>
</feature>
<feature type="helix" evidence="12">
    <location>
        <begin position="279"/>
        <end position="288"/>
    </location>
</feature>
<feature type="helix" evidence="12">
    <location>
        <begin position="308"/>
        <end position="322"/>
    </location>
</feature>
<feature type="turn" evidence="12">
    <location>
        <begin position="327"/>
        <end position="329"/>
    </location>
</feature>
<feature type="helix" evidence="12">
    <location>
        <begin position="333"/>
        <end position="345"/>
    </location>
</feature>
<gene>
    <name evidence="8" type="primary">ZRK1</name>
    <name evidence="7" type="synonym">QRX3</name>
    <name evidence="7" type="synonym">RKS1</name>
    <name evidence="10" type="ordered locus">At3g57710</name>
    <name evidence="11" type="ORF">F15B8.100</name>
</gene>
<accession>Q9SVY5</accession>
<accession>A0A178VAP6</accession>
<accession>Q56YF3</accession>
<accession>U5LR94</accession>
<reference key="1">
    <citation type="journal article" date="2013" name="PLoS Genet.">
        <title>An atypical kinase under balancing selection confers broad-spectrum disease resistance in Arabidopsis.</title>
        <authorList>
            <person name="Huard-Chauveau C."/>
            <person name="Perchepied L."/>
            <person name="Debieu M."/>
            <person name="Rivas S."/>
            <person name="Kroj T."/>
            <person name="Kars I."/>
            <person name="Bergelson J."/>
            <person name="Roux F."/>
            <person name="Roby D."/>
        </authorList>
    </citation>
    <scope>NUCLEOTIDE SEQUENCE [GENOMIC DNA]</scope>
    <scope>FUNCTION</scope>
    <scope>DISRUPTION PHENOTYPE</scope>
    <scope>VARIANT PHE-211</scope>
    <scope>TISSUE SPECIFICITY</scope>
    <source>
        <strain>cv. Ag-0</strain>
        <strain>cv. Bor-1</strain>
        <strain>cv. Bor-4</strain>
        <strain>cv. CIBC-17</strain>
        <strain>cv. Columbia</strain>
        <strain>cv. Kas-1</strain>
        <strain>cv. KNO-18</strain>
        <strain>cv. Kon</strain>
        <strain>cv. Ler-1</strain>
        <strain>cv. Lov-1</strain>
        <strain>cv. Lov-5</strain>
        <strain>cv. Mt-0</strain>
        <strain>cv. Mz-0</strain>
        <strain>cv. N13 Konchezero</strain>
        <strain>cv. Omo2-1</strain>
        <strain>cv. Omo2-3</strain>
        <strain>cv. Pro-0</strain>
        <strain>cv. Pu2-23</strain>
        <strain>cv. Pu2-7</strain>
        <strain>cv. Ra-0</strain>
        <strain>cv. Sorbo</strain>
        <strain>cv. Tamm-2</strain>
        <strain>cv. Tamm-27</strain>
        <strain>cv. Tsu-1</strain>
        <strain>cv. Ull2-5</strain>
        <strain>cv. Uod-1</strain>
        <strain>cv. Var2-1</strain>
        <strain>cv. Var2-6</strain>
        <strain>cv. Wa-1</strain>
        <strain>cv. Wassilewskija-2</strain>
        <strain>cv. Wt-5</strain>
    </source>
</reference>
<reference key="2">
    <citation type="journal article" date="2000" name="Nature">
        <title>Sequence and analysis of chromosome 3 of the plant Arabidopsis thaliana.</title>
        <authorList>
            <person name="Salanoubat M."/>
            <person name="Lemcke K."/>
            <person name="Rieger M."/>
            <person name="Ansorge W."/>
            <person name="Unseld M."/>
            <person name="Fartmann B."/>
            <person name="Valle G."/>
            <person name="Bloecker H."/>
            <person name="Perez-Alonso M."/>
            <person name="Obermaier B."/>
            <person name="Delseny M."/>
            <person name="Boutry M."/>
            <person name="Grivell L.A."/>
            <person name="Mache R."/>
            <person name="Puigdomenech P."/>
            <person name="De Simone V."/>
            <person name="Choisne N."/>
            <person name="Artiguenave F."/>
            <person name="Robert C."/>
            <person name="Brottier P."/>
            <person name="Wincker P."/>
            <person name="Cattolico L."/>
            <person name="Weissenbach J."/>
            <person name="Saurin W."/>
            <person name="Quetier F."/>
            <person name="Schaefer M."/>
            <person name="Mueller-Auer S."/>
            <person name="Gabel C."/>
            <person name="Fuchs M."/>
            <person name="Benes V."/>
            <person name="Wurmbach E."/>
            <person name="Drzonek H."/>
            <person name="Erfle H."/>
            <person name="Jordan N."/>
            <person name="Bangert S."/>
            <person name="Wiedelmann R."/>
            <person name="Kranz H."/>
            <person name="Voss H."/>
            <person name="Holland R."/>
            <person name="Brandt P."/>
            <person name="Nyakatura G."/>
            <person name="Vezzi A."/>
            <person name="D'Angelo M."/>
            <person name="Pallavicini A."/>
            <person name="Toppo S."/>
            <person name="Simionati B."/>
            <person name="Conrad A."/>
            <person name="Hornischer K."/>
            <person name="Kauer G."/>
            <person name="Loehnert T.-H."/>
            <person name="Nordsiek G."/>
            <person name="Reichelt J."/>
            <person name="Scharfe M."/>
            <person name="Schoen O."/>
            <person name="Bargues M."/>
            <person name="Terol J."/>
            <person name="Climent J."/>
            <person name="Navarro P."/>
            <person name="Collado C."/>
            <person name="Perez-Perez A."/>
            <person name="Ottenwaelder B."/>
            <person name="Duchemin D."/>
            <person name="Cooke R."/>
            <person name="Laudie M."/>
            <person name="Berger-Llauro C."/>
            <person name="Purnelle B."/>
            <person name="Masuy D."/>
            <person name="de Haan M."/>
            <person name="Maarse A.C."/>
            <person name="Alcaraz J.-P."/>
            <person name="Cottet A."/>
            <person name="Casacuberta E."/>
            <person name="Monfort A."/>
            <person name="Argiriou A."/>
            <person name="Flores M."/>
            <person name="Liguori R."/>
            <person name="Vitale D."/>
            <person name="Mannhaupt G."/>
            <person name="Haase D."/>
            <person name="Schoof H."/>
            <person name="Rudd S."/>
            <person name="Zaccaria P."/>
            <person name="Mewes H.-W."/>
            <person name="Mayer K.F.X."/>
            <person name="Kaul S."/>
            <person name="Town C.D."/>
            <person name="Koo H.L."/>
            <person name="Tallon L.J."/>
            <person name="Jenkins J."/>
            <person name="Rooney T."/>
            <person name="Rizzo M."/>
            <person name="Walts A."/>
            <person name="Utterback T."/>
            <person name="Fujii C.Y."/>
            <person name="Shea T.P."/>
            <person name="Creasy T.H."/>
            <person name="Haas B."/>
            <person name="Maiti R."/>
            <person name="Wu D."/>
            <person name="Peterson J."/>
            <person name="Van Aken S."/>
            <person name="Pai G."/>
            <person name="Militscher J."/>
            <person name="Sellers P."/>
            <person name="Gill J.E."/>
            <person name="Feldblyum T.V."/>
            <person name="Preuss D."/>
            <person name="Lin X."/>
            <person name="Nierman W.C."/>
            <person name="Salzberg S.L."/>
            <person name="White O."/>
            <person name="Venter J.C."/>
            <person name="Fraser C.M."/>
            <person name="Kaneko T."/>
            <person name="Nakamura Y."/>
            <person name="Sato S."/>
            <person name="Kato T."/>
            <person name="Asamizu E."/>
            <person name="Sasamoto S."/>
            <person name="Kimura T."/>
            <person name="Idesawa K."/>
            <person name="Kawashima K."/>
            <person name="Kishida Y."/>
            <person name="Kiyokawa C."/>
            <person name="Kohara M."/>
            <person name="Matsumoto M."/>
            <person name="Matsuno A."/>
            <person name="Muraki A."/>
            <person name="Nakayama S."/>
            <person name="Nakazaki N."/>
            <person name="Shinpo S."/>
            <person name="Takeuchi C."/>
            <person name="Wada T."/>
            <person name="Watanabe A."/>
            <person name="Yamada M."/>
            <person name="Yasuda M."/>
            <person name="Tabata S."/>
        </authorList>
    </citation>
    <scope>NUCLEOTIDE SEQUENCE [LARGE SCALE GENOMIC DNA]</scope>
    <source>
        <strain>cv. Columbia</strain>
    </source>
</reference>
<reference key="3">
    <citation type="journal article" date="2017" name="Plant J.">
        <title>Araport11: a complete reannotation of the Arabidopsis thaliana reference genome.</title>
        <authorList>
            <person name="Cheng C.Y."/>
            <person name="Krishnakumar V."/>
            <person name="Chan A.P."/>
            <person name="Thibaud-Nissen F."/>
            <person name="Schobel S."/>
            <person name="Town C.D."/>
        </authorList>
    </citation>
    <scope>GENOME REANNOTATION</scope>
    <source>
        <strain>cv. Columbia</strain>
    </source>
</reference>
<reference key="4">
    <citation type="submission" date="2004-09" db="EMBL/GenBank/DDBJ databases">
        <title>Large-scale analysis of RIKEN Arabidopsis full-length (RAFL) cDNAs.</title>
        <authorList>
            <person name="Totoki Y."/>
            <person name="Seki M."/>
            <person name="Ishida J."/>
            <person name="Nakajima M."/>
            <person name="Enju A."/>
            <person name="Kamiya A."/>
            <person name="Narusaka M."/>
            <person name="Shin-i T."/>
            <person name="Nakagawa M."/>
            <person name="Sakamoto N."/>
            <person name="Oishi K."/>
            <person name="Kohara Y."/>
            <person name="Kobayashi M."/>
            <person name="Toyoda A."/>
            <person name="Sakaki Y."/>
            <person name="Sakurai T."/>
            <person name="Iida K."/>
            <person name="Akiyama K."/>
            <person name="Satou M."/>
            <person name="Toyoda T."/>
            <person name="Konagaya A."/>
            <person name="Carninci P."/>
            <person name="Kawai J."/>
            <person name="Hayashizaki Y."/>
            <person name="Shinozaki K."/>
        </authorList>
    </citation>
    <scope>NUCLEOTIDE SEQUENCE [LARGE SCALE MRNA]</scope>
    <source>
        <strain>cv. Columbia</strain>
    </source>
</reference>
<reference key="5">
    <citation type="submission" date="2002-03" db="EMBL/GenBank/DDBJ databases">
        <title>Full-length cDNA from Arabidopsis thaliana.</title>
        <authorList>
            <person name="Brover V.V."/>
            <person name="Troukhan M.E."/>
            <person name="Alexandrov N.A."/>
            <person name="Lu Y.-P."/>
            <person name="Flavell R.B."/>
            <person name="Feldmann K.A."/>
        </authorList>
    </citation>
    <scope>NUCLEOTIDE SEQUENCE [LARGE SCALE MRNA]</scope>
</reference>
<reference key="6">
    <citation type="journal article" date="2015" name="Cell Host Microbe">
        <title>The decoy substrate of a pathogen effector and a pseudokinase specify pathogen-induced modified-self recognition and immunity in plants.</title>
        <authorList>
            <person name="Wang G."/>
            <person name="Roux B."/>
            <person name="Feng F."/>
            <person name="Guy E."/>
            <person name="Li L."/>
            <person name="Li N."/>
            <person name="Zhang X."/>
            <person name="Lautier M."/>
            <person name="Jardinaud M.-F."/>
            <person name="Chabannes M."/>
            <person name="Arlat M."/>
            <person name="Chen S."/>
            <person name="He C."/>
            <person name="Noel L.D."/>
            <person name="Zhou J.-M."/>
        </authorList>
    </citation>
    <scope>FUNCTION</scope>
    <scope>MUTAGENESIS OF LEU-179</scope>
    <scope>DISRUPTION PHENOTYPE</scope>
    <scope>SUBUNIT</scope>
    <scope>INTERACTION WITH RPP13L4/ZAR1</scope>
    <scope>GENE FAMILY</scope>
    <scope>NOMENCLATURE</scope>
    <source>
        <strain>cv. Columbia</strain>
    </source>
</reference>
<reference key="7">
    <citation type="journal article" date="2017" name="New Phytol.">
        <title>Arabidopsis ZED1-related kinases mediate the temperature-sensitive intersection of immune response and growth homeostasis.</title>
        <authorList>
            <person name="Wang Z."/>
            <person name="Cui D."/>
            <person name="Liu J."/>
            <person name="Zhao J."/>
            <person name="Liu C."/>
            <person name="Xin W."/>
            <person name="Li Y."/>
            <person name="Liu N."/>
            <person name="Ren D."/>
            <person name="Tang D."/>
            <person name="Hu Y."/>
        </authorList>
    </citation>
    <scope>INDUCTION BY ELEVATED TEMPERATURE</scope>
    <source>
        <strain>cv. Columbia</strain>
        <strain>cv. Landsberg erecta</strain>
    </source>
</reference>
<reference key="8">
    <citation type="journal article" date="2019" name="Science">
        <title>Reconstitution and structure of a plant NLR resistosome conferring immunity.</title>
        <authorList>
            <person name="Wang J."/>
            <person name="Hu M."/>
            <person name="Wang J."/>
            <person name="Qi J."/>
            <person name="Han Z."/>
            <person name="Wang G."/>
            <person name="Qi Y."/>
            <person name="Wang H.-W."/>
            <person name="Zhou J.-M."/>
            <person name="Chai J."/>
        </authorList>
    </citation>
    <scope>STRUCTURE BY ELECTRON MICROSCOPY (3.40 ANGSTROMS)</scope>
    <scope>SUBUNIT</scope>
    <source>
        <strain>cv. Columbia</strain>
    </source>
</reference>
<reference key="9">
    <citation type="journal article" date="2019" name="Science">
        <title>Ligand-triggered allosteric ADP release primes a plant NLR complex.</title>
        <authorList>
            <person name="Wang J."/>
            <person name="Wang J."/>
            <person name="Hu M."/>
            <person name="Wu S."/>
            <person name="Qi J."/>
            <person name="Wang G."/>
            <person name="Han Z."/>
            <person name="Qi Y."/>
            <person name="Gao N."/>
            <person name="Wang H.-W."/>
            <person name="Zhou J.-M."/>
            <person name="Chai J."/>
        </authorList>
    </citation>
    <scope>STRUCTURE BY ELECTRON MICROSCOPY (3.90 ANGSTROMS)</scope>
    <scope>FUNCTION</scope>
    <scope>MUTAGENESIS OF GLY-27; LEU-31; VAL-35; GLN-68; ASP-69; VAL-70; THR-231; PHE-232; GLY-233; ILE-235 AND HIS-240</scope>
    <scope>SUBUNIT</scope>
    <scope>INTERACTION WITH RPP13L4/ZAR1 AND PBL2</scope>
    <source>
        <strain>cv. Columbia</strain>
    </source>
</reference>
<organism>
    <name type="scientific">Arabidopsis thaliana</name>
    <name type="common">Mouse-ear cress</name>
    <dbReference type="NCBI Taxonomy" id="3702"/>
    <lineage>
        <taxon>Eukaryota</taxon>
        <taxon>Viridiplantae</taxon>
        <taxon>Streptophyta</taxon>
        <taxon>Embryophyta</taxon>
        <taxon>Tracheophyta</taxon>
        <taxon>Spermatophyta</taxon>
        <taxon>Magnoliopsida</taxon>
        <taxon>eudicotyledons</taxon>
        <taxon>Gunneridae</taxon>
        <taxon>Pentapetalae</taxon>
        <taxon>rosids</taxon>
        <taxon>malvids</taxon>
        <taxon>Brassicales</taxon>
        <taxon>Brassicaceae</taxon>
        <taxon>Camelineae</taxon>
        <taxon>Arabidopsis</taxon>
    </lineage>
</organism>
<keyword id="KW-0002">3D-structure</keyword>
<keyword id="KW-0067">ATP-binding</keyword>
<keyword id="KW-0418">Kinase</keyword>
<keyword id="KW-0547">Nucleotide-binding</keyword>
<keyword id="KW-0611">Plant defense</keyword>
<keyword id="KW-1185">Reference proteome</keyword>
<keyword id="KW-0808">Transferase</keyword>
<name>ZRK1_ARATH</name>
<dbReference type="EC" id="2.7.11.1" evidence="1"/>
<dbReference type="EMBL" id="KF363640">
    <property type="protein sequence ID" value="AGX29308.1"/>
    <property type="molecule type" value="Genomic_DNA"/>
</dbReference>
<dbReference type="EMBL" id="KF363645">
    <property type="protein sequence ID" value="AGX29312.1"/>
    <property type="molecule type" value="Genomic_DNA"/>
</dbReference>
<dbReference type="EMBL" id="KF363646">
    <property type="protein sequence ID" value="AGX29313.1"/>
    <property type="molecule type" value="Genomic_DNA"/>
</dbReference>
<dbReference type="EMBL" id="KF363650">
    <property type="protein sequence ID" value="AGX29317.1"/>
    <property type="molecule type" value="Genomic_DNA"/>
</dbReference>
<dbReference type="EMBL" id="KF363652">
    <property type="protein sequence ID" value="AGX29319.1"/>
    <property type="molecule type" value="Genomic_DNA"/>
</dbReference>
<dbReference type="EMBL" id="KF363653">
    <property type="protein sequence ID" value="AGX29320.1"/>
    <property type="molecule type" value="Genomic_DNA"/>
</dbReference>
<dbReference type="EMBL" id="KF363671">
    <property type="protein sequence ID" value="AGX29335.1"/>
    <property type="molecule type" value="Genomic_DNA"/>
</dbReference>
<dbReference type="EMBL" id="KF363674">
    <property type="protein sequence ID" value="AGX29337.1"/>
    <property type="molecule type" value="Genomic_DNA"/>
</dbReference>
<dbReference type="EMBL" id="KF363675">
    <property type="protein sequence ID" value="AGX29338.1"/>
    <property type="molecule type" value="Genomic_DNA"/>
</dbReference>
<dbReference type="EMBL" id="KF363678">
    <property type="protein sequence ID" value="AGX29341.1"/>
    <property type="molecule type" value="Genomic_DNA"/>
</dbReference>
<dbReference type="EMBL" id="KF363680">
    <property type="protein sequence ID" value="AGX29343.1"/>
    <property type="molecule type" value="Genomic_DNA"/>
</dbReference>
<dbReference type="EMBL" id="KF363681">
    <property type="protein sequence ID" value="AGX29344.1"/>
    <property type="molecule type" value="Genomic_DNA"/>
</dbReference>
<dbReference type="EMBL" id="KF363688">
    <property type="protein sequence ID" value="AGX29350.1"/>
    <property type="molecule type" value="Genomic_DNA"/>
</dbReference>
<dbReference type="EMBL" id="KF363689">
    <property type="protein sequence ID" value="AGX29351.1"/>
    <property type="molecule type" value="Genomic_DNA"/>
</dbReference>
<dbReference type="EMBL" id="KF363694">
    <property type="protein sequence ID" value="AGX29355.1"/>
    <property type="molecule type" value="Genomic_DNA"/>
</dbReference>
<dbReference type="EMBL" id="KF363695">
    <property type="protein sequence ID" value="AGX29356.1"/>
    <property type="molecule type" value="Genomic_DNA"/>
</dbReference>
<dbReference type="EMBL" id="KF363699">
    <property type="protein sequence ID" value="AGX29360.1"/>
    <property type="molecule type" value="Genomic_DNA"/>
</dbReference>
<dbReference type="EMBL" id="KF363700">
    <property type="protein sequence ID" value="AGX29361.1"/>
    <property type="molecule type" value="Genomic_DNA"/>
</dbReference>
<dbReference type="EMBL" id="KF363701">
    <property type="protein sequence ID" value="AGX29362.1"/>
    <property type="molecule type" value="Genomic_DNA"/>
</dbReference>
<dbReference type="EMBL" id="KF363702">
    <property type="protein sequence ID" value="AGX29363.1"/>
    <property type="molecule type" value="Genomic_DNA"/>
</dbReference>
<dbReference type="EMBL" id="KF363716">
    <property type="protein sequence ID" value="AGX29371.1"/>
    <property type="molecule type" value="Genomic_DNA"/>
</dbReference>
<dbReference type="EMBL" id="KF363717">
    <property type="protein sequence ID" value="AGX29372.1"/>
    <property type="molecule type" value="Genomic_DNA"/>
</dbReference>
<dbReference type="EMBL" id="KF363720">
    <property type="protein sequence ID" value="AGX29375.1"/>
    <property type="molecule type" value="Genomic_DNA"/>
</dbReference>
<dbReference type="EMBL" id="KF363722">
    <property type="protein sequence ID" value="AGX29377.1"/>
    <property type="molecule type" value="Genomic_DNA"/>
</dbReference>
<dbReference type="EMBL" id="KF363723">
    <property type="protein sequence ID" value="AGX29378.1"/>
    <property type="molecule type" value="Genomic_DNA"/>
</dbReference>
<dbReference type="EMBL" id="KF363725">
    <property type="protein sequence ID" value="AGX29380.1"/>
    <property type="molecule type" value="Genomic_DNA"/>
</dbReference>
<dbReference type="EMBL" id="KF363726">
    <property type="protein sequence ID" value="AGX29381.1"/>
    <property type="molecule type" value="Genomic_DNA"/>
</dbReference>
<dbReference type="EMBL" id="KF363727">
    <property type="protein sequence ID" value="AGX29382.1"/>
    <property type="molecule type" value="Genomic_DNA"/>
</dbReference>
<dbReference type="EMBL" id="KF363730">
    <property type="protein sequence ID" value="AGX29385.1"/>
    <property type="molecule type" value="Genomic_DNA"/>
</dbReference>
<dbReference type="EMBL" id="KF363731">
    <property type="protein sequence ID" value="AGX29386.1"/>
    <property type="molecule type" value="Genomic_DNA"/>
</dbReference>
<dbReference type="EMBL" id="KF363711">
    <property type="protein sequence ID" value="AGX29367.1"/>
    <property type="molecule type" value="Genomic_DNA"/>
</dbReference>
<dbReference type="EMBL" id="AL049660">
    <property type="protein sequence ID" value="CAB41184.1"/>
    <property type="molecule type" value="Genomic_DNA"/>
</dbReference>
<dbReference type="EMBL" id="CP002686">
    <property type="protein sequence ID" value="AEE79688.1"/>
    <property type="molecule type" value="Genomic_DNA"/>
</dbReference>
<dbReference type="EMBL" id="AK175129">
    <property type="protein sequence ID" value="BAD42892.1"/>
    <property type="molecule type" value="mRNA"/>
</dbReference>
<dbReference type="EMBL" id="AK175546">
    <property type="protein sequence ID" value="BAD43309.1"/>
    <property type="molecule type" value="mRNA"/>
</dbReference>
<dbReference type="EMBL" id="AK175568">
    <property type="protein sequence ID" value="BAD43331.1"/>
    <property type="molecule type" value="mRNA"/>
</dbReference>
<dbReference type="EMBL" id="AK221369">
    <property type="protein sequence ID" value="BAD94258.1"/>
    <property type="molecule type" value="mRNA"/>
</dbReference>
<dbReference type="EMBL" id="AY085150">
    <property type="protein sequence ID" value="AAM61703.1"/>
    <property type="molecule type" value="mRNA"/>
</dbReference>
<dbReference type="PIR" id="T06749">
    <property type="entry name" value="T06749"/>
</dbReference>
<dbReference type="RefSeq" id="NP_191330.1">
    <property type="nucleotide sequence ID" value="NM_115631.3"/>
</dbReference>
<dbReference type="PDB" id="6J5T">
    <property type="method" value="EM"/>
    <property type="resolution" value="3.40 A"/>
    <property type="chains" value="B/E/H/K/N=1-351"/>
</dbReference>
<dbReference type="PDB" id="6J5U">
    <property type="method" value="EM"/>
    <property type="resolution" value="3.90 A"/>
    <property type="chains" value="B=1-351"/>
</dbReference>
<dbReference type="PDB" id="6J5V">
    <property type="method" value="EM"/>
    <property type="resolution" value="4.25 A"/>
    <property type="chains" value="B=1-351"/>
</dbReference>
<dbReference type="PDB" id="6J5W">
    <property type="method" value="EM"/>
    <property type="resolution" value="3.70 A"/>
    <property type="chains" value="B=1-351"/>
</dbReference>
<dbReference type="PDB" id="6J6I">
    <property type="method" value="EM"/>
    <property type="resolution" value="3.70 A"/>
    <property type="chains" value="B=1-351"/>
</dbReference>
<dbReference type="PDBsum" id="6J5T"/>
<dbReference type="PDBsum" id="6J5U"/>
<dbReference type="PDBsum" id="6J5V"/>
<dbReference type="PDBsum" id="6J5W"/>
<dbReference type="PDBsum" id="6J6I"/>
<dbReference type="EMDB" id="EMD-0680"/>
<dbReference type="EMDB" id="EMD-0681"/>
<dbReference type="EMDB" id="EMD-0682"/>
<dbReference type="EMDB" id="EMD-0688"/>
<dbReference type="SMR" id="Q9SVY5"/>
<dbReference type="FunCoup" id="Q9SVY5">
    <property type="interactions" value="453"/>
</dbReference>
<dbReference type="STRING" id="3702.Q9SVY5"/>
<dbReference type="TCDB" id="1.A.87.2.17">
    <property type="family name" value="the mechanosensitive calcium channel (mca) family"/>
</dbReference>
<dbReference type="PaxDb" id="3702-AT3G57710.1"/>
<dbReference type="ProteomicsDB" id="181185"/>
<dbReference type="EnsemblPlants" id="AT3G57710.1">
    <property type="protein sequence ID" value="AT3G57710.1"/>
    <property type="gene ID" value="AT3G57710"/>
</dbReference>
<dbReference type="GeneID" id="824940"/>
<dbReference type="Gramene" id="AT3G57710.1">
    <property type="protein sequence ID" value="AT3G57710.1"/>
    <property type="gene ID" value="AT3G57710"/>
</dbReference>
<dbReference type="KEGG" id="ath:AT3G57710"/>
<dbReference type="Araport" id="AT3G57710"/>
<dbReference type="TAIR" id="AT3G57710">
    <property type="gene designation" value="RKS1"/>
</dbReference>
<dbReference type="eggNOG" id="KOG1187">
    <property type="taxonomic scope" value="Eukaryota"/>
</dbReference>
<dbReference type="HOGENOM" id="CLU_000288_21_4_1"/>
<dbReference type="InParanoid" id="Q9SVY5"/>
<dbReference type="OMA" id="CCEERDE"/>
<dbReference type="PhylomeDB" id="Q9SVY5"/>
<dbReference type="PRO" id="PR:Q9SVY5"/>
<dbReference type="Proteomes" id="UP000006548">
    <property type="component" value="Chromosome 3"/>
</dbReference>
<dbReference type="ExpressionAtlas" id="Q9SVY5">
    <property type="expression patterns" value="baseline and differential"/>
</dbReference>
<dbReference type="GO" id="GO:0005524">
    <property type="term" value="F:ATP binding"/>
    <property type="evidence" value="ECO:0007669"/>
    <property type="project" value="UniProtKB-KW"/>
</dbReference>
<dbReference type="GO" id="GO:0016301">
    <property type="term" value="F:kinase activity"/>
    <property type="evidence" value="ECO:0007669"/>
    <property type="project" value="UniProtKB-KW"/>
</dbReference>
<dbReference type="GO" id="GO:0007166">
    <property type="term" value="P:cell surface receptor signaling pathway"/>
    <property type="evidence" value="ECO:0007669"/>
    <property type="project" value="InterPro"/>
</dbReference>
<dbReference type="GO" id="GO:0042742">
    <property type="term" value="P:defense response to bacterium"/>
    <property type="evidence" value="ECO:0000315"/>
    <property type="project" value="UniProtKB"/>
</dbReference>
<dbReference type="GO" id="GO:1900426">
    <property type="term" value="P:positive regulation of defense response to bacterium"/>
    <property type="evidence" value="ECO:0000315"/>
    <property type="project" value="UniProtKB"/>
</dbReference>
<dbReference type="GO" id="GO:0009266">
    <property type="term" value="P:response to temperature stimulus"/>
    <property type="evidence" value="ECO:0000270"/>
    <property type="project" value="UniProtKB"/>
</dbReference>
<dbReference type="FunFam" id="1.10.510.10:FF:000774">
    <property type="entry name" value="Kinase family protein"/>
    <property type="match status" value="1"/>
</dbReference>
<dbReference type="Gene3D" id="3.30.200.20">
    <property type="entry name" value="Phosphorylase Kinase, domain 1"/>
    <property type="match status" value="1"/>
</dbReference>
<dbReference type="Gene3D" id="1.10.510.10">
    <property type="entry name" value="Transferase(Phosphotransferase) domain 1"/>
    <property type="match status" value="1"/>
</dbReference>
<dbReference type="InterPro" id="IPR011009">
    <property type="entry name" value="Kinase-like_dom_sf"/>
</dbReference>
<dbReference type="InterPro" id="IPR000719">
    <property type="entry name" value="Prot_kinase_dom"/>
</dbReference>
<dbReference type="InterPro" id="IPR045274">
    <property type="entry name" value="WAK-like"/>
</dbReference>
<dbReference type="PANTHER" id="PTHR27005:SF507">
    <property type="entry name" value="SERINE_THREONINE-PROTEIN KINASE ZRK1"/>
    <property type="match status" value="1"/>
</dbReference>
<dbReference type="PANTHER" id="PTHR27005">
    <property type="entry name" value="WALL-ASSOCIATED RECEPTOR KINASE-LIKE 21"/>
    <property type="match status" value="1"/>
</dbReference>
<dbReference type="Pfam" id="PF00069">
    <property type="entry name" value="Pkinase"/>
    <property type="match status" value="1"/>
</dbReference>
<dbReference type="PIRSF" id="PIRSF000654">
    <property type="entry name" value="Integrin-linked_kinase"/>
    <property type="match status" value="1"/>
</dbReference>
<dbReference type="SUPFAM" id="SSF56112">
    <property type="entry name" value="Protein kinase-like (PK-like)"/>
    <property type="match status" value="1"/>
</dbReference>
<dbReference type="PROSITE" id="PS50011">
    <property type="entry name" value="PROTEIN_KINASE_DOM"/>
    <property type="match status" value="1"/>
</dbReference>
<sequence>MKKQYLKSGSGTRKEKDKAKRWFLDNGSIFLRELVADCNGKSIPIRSFSPEQILKATNNFDSSCFVSQDVYYKWYRGEIEDRSYMIKRFSEDEITGKRHRVKEVYNDIVLSARMSNHSNFLQLLGCCLEFPFPVLVFEFAEHGAMNQRGGVIVNGEESLLPWSVRLKIGKEIANAVTYLHTAFPKIIIHRDVKPMHVFLDKNWTAKLSDLSFSISLPEGKSRIEAEWVLGTFGYIDPLYHKTCFVTEYTDVYSFGICLLVIITGKPAIMTISDGDLQGILSLVRELCENGKLDEVIDPRLMKDITSGQRLQVEACVVLALRCCKERDEDRPKMIQVAKELKQIEASLKNSS</sequence>
<proteinExistence type="evidence at protein level"/>
<evidence type="ECO:0000255" key="1">
    <source>
        <dbReference type="PROSITE-ProRule" id="PRU00159"/>
    </source>
</evidence>
<evidence type="ECO:0000269" key="2">
    <source>
    </source>
</evidence>
<evidence type="ECO:0000269" key="3">
    <source>
    </source>
</evidence>
<evidence type="ECO:0000269" key="4">
    <source>
    </source>
</evidence>
<evidence type="ECO:0000269" key="5">
    <source>
    </source>
</evidence>
<evidence type="ECO:0000269" key="6">
    <source>
    </source>
</evidence>
<evidence type="ECO:0000303" key="7">
    <source>
    </source>
</evidence>
<evidence type="ECO:0000303" key="8">
    <source>
    </source>
</evidence>
<evidence type="ECO:0000305" key="9"/>
<evidence type="ECO:0000312" key="10">
    <source>
        <dbReference type="Araport" id="AT3G57710"/>
    </source>
</evidence>
<evidence type="ECO:0000312" key="11">
    <source>
        <dbReference type="EMBL" id="CAB41184.1"/>
    </source>
</evidence>
<evidence type="ECO:0007829" key="12">
    <source>
        <dbReference type="PDB" id="6J5T"/>
    </source>
</evidence>
<protein>
    <recommendedName>
        <fullName evidence="8">Serine/threonine-protein kinase ZRK1</fullName>
        <ecNumber evidence="1">2.7.11.1</ecNumber>
    </recommendedName>
    <alternativeName>
        <fullName evidence="7">Protein RESISTANCE RELATED KINASE 1</fullName>
    </alternativeName>
    <alternativeName>
        <fullName evidence="7">Quantitative resistance to Xanthomonas campestris pv. campestris 568</fullName>
        <shortName evidence="7">Quantitative resistance to Xcc568</shortName>
    </alternativeName>
</protein>
<comment type="function">
    <text evidence="2 3 5">Serine/threonine-protein kinase that confers a broad-spectrum quantitative disease resistance (QDR) to the pathogenic biotrophic bacteria Xanthomonas campestris (e.g. pv. campestris (Xcc), pv. raphani, pv. armoriaceae and pv. incanae) by restricting bacterial spread to the vascular system from the infection site; X.campestris causes black rot disease in crops (PubMed:24068949, PubMed:26355215, PubMed:30948526). Seems to not have any kinase activity (PubMed:24068949).</text>
</comment>
<comment type="catalytic activity">
    <reaction evidence="1">
        <text>L-seryl-[protein] + ATP = O-phospho-L-seryl-[protein] + ADP + H(+)</text>
        <dbReference type="Rhea" id="RHEA:17989"/>
        <dbReference type="Rhea" id="RHEA-COMP:9863"/>
        <dbReference type="Rhea" id="RHEA-COMP:11604"/>
        <dbReference type="ChEBI" id="CHEBI:15378"/>
        <dbReference type="ChEBI" id="CHEBI:29999"/>
        <dbReference type="ChEBI" id="CHEBI:30616"/>
        <dbReference type="ChEBI" id="CHEBI:83421"/>
        <dbReference type="ChEBI" id="CHEBI:456216"/>
        <dbReference type="EC" id="2.7.11.1"/>
    </reaction>
</comment>
<comment type="catalytic activity">
    <reaction evidence="1">
        <text>L-threonyl-[protein] + ATP = O-phospho-L-threonyl-[protein] + ADP + H(+)</text>
        <dbReference type="Rhea" id="RHEA:46608"/>
        <dbReference type="Rhea" id="RHEA-COMP:11060"/>
        <dbReference type="Rhea" id="RHEA-COMP:11605"/>
        <dbReference type="ChEBI" id="CHEBI:15378"/>
        <dbReference type="ChEBI" id="CHEBI:30013"/>
        <dbReference type="ChEBI" id="CHEBI:30616"/>
        <dbReference type="ChEBI" id="CHEBI:61977"/>
        <dbReference type="ChEBI" id="CHEBI:456216"/>
        <dbReference type="EC" id="2.7.11.1"/>
    </reaction>
</comment>
<comment type="subunit">
    <text evidence="3 5 6">Component of a stable high-order oligomeric complex made of RKS1 and RPP13L4/ZAR1 which recruits Xanthomonas campestris effector XopAC/AvrAC-mediated uridylylated PBL2 in the presence of ATP to form a wheel-like pentameric resistosome; this complex triggers immunity toward X.campestris in vascular tissues (PubMed:26355215, PubMed:30948526, PubMed:30948527). Interacts with RPP13L4/ZAR1 and uridylylated PBL2 (PubMed:26355215, PubMed:30948526).</text>
</comment>
<comment type="tissue specificity">
    <text evidence="2">Expressed at high levels in germinating seeds and at lower levels in adult leaves.</text>
</comment>
<comment type="induction">
    <text evidence="4">Induced by elevated temperature (e.g. at 25 degrees Celsius).</text>
</comment>
<comment type="disruption phenotype">
    <text evidence="2 3">Increased sensitivity to the pathogenic biotrophic bacteria Xanthomonas campestris pv. campestris (Xcc).</text>
</comment>
<comment type="similarity">
    <text evidence="9">Belongs to the protein kinase superfamily. Ser/Thr protein kinase family. ZRK subfamily.</text>
</comment>